<organism>
    <name type="scientific">Homo sapiens</name>
    <name type="common">Human</name>
    <dbReference type="NCBI Taxonomy" id="9606"/>
    <lineage>
        <taxon>Eukaryota</taxon>
        <taxon>Metazoa</taxon>
        <taxon>Chordata</taxon>
        <taxon>Craniata</taxon>
        <taxon>Vertebrata</taxon>
        <taxon>Euteleostomi</taxon>
        <taxon>Mammalia</taxon>
        <taxon>Eutheria</taxon>
        <taxon>Euarchontoglires</taxon>
        <taxon>Primates</taxon>
        <taxon>Haplorrhini</taxon>
        <taxon>Catarrhini</taxon>
        <taxon>Hominidae</taxon>
        <taxon>Homo</taxon>
    </lineage>
</organism>
<name>FILA2_HUMAN</name>
<comment type="function">
    <text evidence="8 9">Essential for normal cell-cell adhesion in the cornified cell layers (PubMed:29758285). Important for proper integrity and mechanical strength of the stratum corneum of the epidermis (PubMed:29505760).</text>
</comment>
<comment type="subcellular location">
    <subcellularLocation>
        <location evidence="5">Cytoplasm</location>
    </subcellularLocation>
    <subcellularLocation>
        <location evidence="5">Cytoplasmic granule</location>
    </subcellularLocation>
    <text evidence="5 6">In the stratum corneum of the epidermis, dispersed diffusely throughout the cytoplasm, while in the stratum granulosum, localized within keratohyalin granules (PubMed:19384417, PubMed:21531719). In granular keratinocytes and in lower corneocytes, colocalizes with calpain-1/CAPN1.</text>
</comment>
<comment type="tissue specificity">
    <text evidence="5 6">Expressed in skin, thymus, stomach and placenta, but not detected in heart, brain, liver, lung, bone marrow, small intestine, spleen, prostate, colon, adrenal gland, kidney, pancreas, mammary gland, bladder, thyroid, salivary gland and trachea. Weakly expressed in esophagus, tonsils and testis (at protein level). In the skin, strongly expressed in the upper stratum granulosum and lower stratum corneum, but not detected in the upper stratum corneum (at protein level) (PubMed:19384417, PubMed:21531719). In scalp hair follicles, mainly restricted within the granular and cornified cells surrounding the infundibular outer root sheath, with weak expression in central and proximal outer root sheath (at protein level). Tends to be down-regulated in sporiatic lesions compared to non-lesional skin inthe same patients (PubMed:19384417).</text>
</comment>
<comment type="induction">
    <text evidence="5">In cultured foreskin fibroblasts, up-regulated in response to Ca(2+) stimulation.</text>
</comment>
<comment type="PTM">
    <text evidence="6">Deiminated by PADI1, PADI2 or PADI3 in vitro. The deiminated form is degraded by calpain-1/CAPN1 more quickly and into shorter peptides than the intact protein.</text>
</comment>
<comment type="PTM">
    <text evidence="6">May be processed by calpain-1/CAPN1 in the uppermost epidermal layers.</text>
</comment>
<comment type="disease" evidence="7 8 9">
    <disease id="DI-05307">
        <name>Peeling skin syndrome 6</name>
        <acronym>PSS6</acronym>
        <description>A form of peeling skin syndrome, a genodermatosis characterized by generalized, continuous shedding of the outer layers of the epidermis. Two main PSS subtypes have been suggested. Patients with non-inflammatory PSS (type A) manifest white scaling, with painless and easy removal of the skin, irritation when in contact with water, dust and sand, and no history of erythema, pruritis or atopy. Inflammatory PSS (type B) is associated with generalized erythema, pruritus and atopy. It is an ichthyosiform erythroderma characterized by lifelong patchy peeling of the entire skin with onset at birth or shortly after. Several patients have been reported with high IgE levels. PSS6 patients manifest generalized ichthyotic dry skin, and bullous peeling lesions on the trunk and limbs at sites of minor trauma. Skin symptoms are exacerbated by warmth and humidity. PSS6 inheritance is autosomal recessive.</description>
        <dbReference type="MIM" id="618084"/>
    </disease>
    <text>The disease is caused by variants affecting the gene represented in this entry.</text>
</comment>
<comment type="similarity">
    <text evidence="11">Belongs to the S100-fused protein family.</text>
</comment>
<comment type="similarity">
    <text evidence="11">In the N-terminal section; belongs to the S-100 family.</text>
</comment>
<protein>
    <recommendedName>
        <fullName>Filaggrin-2</fullName>
        <shortName>FLG-2</shortName>
    </recommendedName>
    <alternativeName>
        <fullName>Intermediate filament-associated and psoriasis-susceptibility protein</fullName>
        <shortName>Ifapsoriasin</shortName>
    </alternativeName>
</protein>
<evidence type="ECO:0000250" key="1"/>
<evidence type="ECO:0000250" key="2">
    <source>
        <dbReference type="UniProtKB" id="Q2VIS4"/>
    </source>
</evidence>
<evidence type="ECO:0000255" key="3">
    <source>
        <dbReference type="PROSITE-ProRule" id="PRU00448"/>
    </source>
</evidence>
<evidence type="ECO:0000256" key="4">
    <source>
        <dbReference type="SAM" id="MobiDB-lite"/>
    </source>
</evidence>
<evidence type="ECO:0000269" key="5">
    <source>
    </source>
</evidence>
<evidence type="ECO:0000269" key="6">
    <source>
    </source>
</evidence>
<evidence type="ECO:0000269" key="7">
    <source>
    </source>
</evidence>
<evidence type="ECO:0000269" key="8">
    <source>
    </source>
</evidence>
<evidence type="ECO:0000269" key="9">
    <source>
    </source>
</evidence>
<evidence type="ECO:0000269" key="10">
    <source>
    </source>
</evidence>
<evidence type="ECO:0000305" key="11"/>
<reference key="1">
    <citation type="journal article" date="2009" name="PLoS ONE">
        <title>Molecular identification and expression analysis of filaggrin-2, a member of the S100 fused-type protein family.</title>
        <authorList>
            <person name="Wu Z."/>
            <person name="Hansmann B."/>
            <person name="Meyer-Hoffert U."/>
            <person name="Glaser R."/>
            <person name="Schroder J.M."/>
        </authorList>
    </citation>
    <scope>NUCLEOTIDE SEQUENCE [MRNA]</scope>
    <scope>SUBCELLULAR LOCATION</scope>
    <scope>TISSUE SPECIFICITY</scope>
    <scope>INDUCTION BY CALCIUM</scope>
    <source>
        <tissue>Foreskin keratinocyte</tissue>
    </source>
</reference>
<reference key="2">
    <citation type="submission" date="2005-07" db="EMBL/GenBank/DDBJ databases">
        <title>Identification and partial characterization of the human homolog of mouse flg-2.</title>
        <authorList>
            <person name="Listwan P."/>
            <person name="Rothnagel J.A."/>
        </authorList>
    </citation>
    <scope>NUCLEOTIDE SEQUENCE [GENOMIC DNA]</scope>
</reference>
<reference key="3">
    <citation type="journal article" date="2006" name="Nature">
        <title>The DNA sequence and biological annotation of human chromosome 1.</title>
        <authorList>
            <person name="Gregory S.G."/>
            <person name="Barlow K.F."/>
            <person name="McLay K.E."/>
            <person name="Kaul R."/>
            <person name="Swarbreck D."/>
            <person name="Dunham A."/>
            <person name="Scott C.E."/>
            <person name="Howe K.L."/>
            <person name="Woodfine K."/>
            <person name="Spencer C.C.A."/>
            <person name="Jones M.C."/>
            <person name="Gillson C."/>
            <person name="Searle S."/>
            <person name="Zhou Y."/>
            <person name="Kokocinski F."/>
            <person name="McDonald L."/>
            <person name="Evans R."/>
            <person name="Phillips K."/>
            <person name="Atkinson A."/>
            <person name="Cooper R."/>
            <person name="Jones C."/>
            <person name="Hall R.E."/>
            <person name="Andrews T.D."/>
            <person name="Lloyd C."/>
            <person name="Ainscough R."/>
            <person name="Almeida J.P."/>
            <person name="Ambrose K.D."/>
            <person name="Anderson F."/>
            <person name="Andrew R.W."/>
            <person name="Ashwell R.I.S."/>
            <person name="Aubin K."/>
            <person name="Babbage A.K."/>
            <person name="Bagguley C.L."/>
            <person name="Bailey J."/>
            <person name="Beasley H."/>
            <person name="Bethel G."/>
            <person name="Bird C.P."/>
            <person name="Bray-Allen S."/>
            <person name="Brown J.Y."/>
            <person name="Brown A.J."/>
            <person name="Buckley D."/>
            <person name="Burton J."/>
            <person name="Bye J."/>
            <person name="Carder C."/>
            <person name="Chapman J.C."/>
            <person name="Clark S.Y."/>
            <person name="Clarke G."/>
            <person name="Clee C."/>
            <person name="Cobley V."/>
            <person name="Collier R.E."/>
            <person name="Corby N."/>
            <person name="Coville G.J."/>
            <person name="Davies J."/>
            <person name="Deadman R."/>
            <person name="Dunn M."/>
            <person name="Earthrowl M."/>
            <person name="Ellington A.G."/>
            <person name="Errington H."/>
            <person name="Frankish A."/>
            <person name="Frankland J."/>
            <person name="French L."/>
            <person name="Garner P."/>
            <person name="Garnett J."/>
            <person name="Gay L."/>
            <person name="Ghori M.R.J."/>
            <person name="Gibson R."/>
            <person name="Gilby L.M."/>
            <person name="Gillett W."/>
            <person name="Glithero R.J."/>
            <person name="Grafham D.V."/>
            <person name="Griffiths C."/>
            <person name="Griffiths-Jones S."/>
            <person name="Grocock R."/>
            <person name="Hammond S."/>
            <person name="Harrison E.S.I."/>
            <person name="Hart E."/>
            <person name="Haugen E."/>
            <person name="Heath P.D."/>
            <person name="Holmes S."/>
            <person name="Holt K."/>
            <person name="Howden P.J."/>
            <person name="Hunt A.R."/>
            <person name="Hunt S.E."/>
            <person name="Hunter G."/>
            <person name="Isherwood J."/>
            <person name="James R."/>
            <person name="Johnson C."/>
            <person name="Johnson D."/>
            <person name="Joy A."/>
            <person name="Kay M."/>
            <person name="Kershaw J.K."/>
            <person name="Kibukawa M."/>
            <person name="Kimberley A.M."/>
            <person name="King A."/>
            <person name="Knights A.J."/>
            <person name="Lad H."/>
            <person name="Laird G."/>
            <person name="Lawlor S."/>
            <person name="Leongamornlert D.A."/>
            <person name="Lloyd D.M."/>
            <person name="Loveland J."/>
            <person name="Lovell J."/>
            <person name="Lush M.J."/>
            <person name="Lyne R."/>
            <person name="Martin S."/>
            <person name="Mashreghi-Mohammadi M."/>
            <person name="Matthews L."/>
            <person name="Matthews N.S.W."/>
            <person name="McLaren S."/>
            <person name="Milne S."/>
            <person name="Mistry S."/>
            <person name="Moore M.J.F."/>
            <person name="Nickerson T."/>
            <person name="O'Dell C.N."/>
            <person name="Oliver K."/>
            <person name="Palmeiri A."/>
            <person name="Palmer S.A."/>
            <person name="Parker A."/>
            <person name="Patel D."/>
            <person name="Pearce A.V."/>
            <person name="Peck A.I."/>
            <person name="Pelan S."/>
            <person name="Phelps K."/>
            <person name="Phillimore B.J."/>
            <person name="Plumb R."/>
            <person name="Rajan J."/>
            <person name="Raymond C."/>
            <person name="Rouse G."/>
            <person name="Saenphimmachak C."/>
            <person name="Sehra H.K."/>
            <person name="Sheridan E."/>
            <person name="Shownkeen R."/>
            <person name="Sims S."/>
            <person name="Skuce C.D."/>
            <person name="Smith M."/>
            <person name="Steward C."/>
            <person name="Subramanian S."/>
            <person name="Sycamore N."/>
            <person name="Tracey A."/>
            <person name="Tromans A."/>
            <person name="Van Helmond Z."/>
            <person name="Wall M."/>
            <person name="Wallis J.M."/>
            <person name="White S."/>
            <person name="Whitehead S.L."/>
            <person name="Wilkinson J.E."/>
            <person name="Willey D.L."/>
            <person name="Williams H."/>
            <person name="Wilming L."/>
            <person name="Wray P.W."/>
            <person name="Wu Z."/>
            <person name="Coulson A."/>
            <person name="Vaudin M."/>
            <person name="Sulston J.E."/>
            <person name="Durbin R.M."/>
            <person name="Hubbard T."/>
            <person name="Wooster R."/>
            <person name="Dunham I."/>
            <person name="Carter N.P."/>
            <person name="McVean G."/>
            <person name="Ross M.T."/>
            <person name="Harrow J."/>
            <person name="Olson M.V."/>
            <person name="Beck S."/>
            <person name="Rogers J."/>
            <person name="Bentley D.R."/>
        </authorList>
    </citation>
    <scope>NUCLEOTIDE SEQUENCE [LARGE SCALE GENOMIC DNA]</scope>
</reference>
<reference key="4">
    <citation type="submission" date="2008-03" db="UniProtKB">
        <authorList>
            <person name="Bienvenut W.V."/>
            <person name="Calvo F."/>
            <person name="Kolch W."/>
        </authorList>
    </citation>
    <scope>PROTEIN SEQUENCE OF 7-17 AND 40-46</scope>
    <scope>IDENTIFICATION BY MASS SPECTROMETRY</scope>
    <source>
        <tissue>Cervix carcinoma</tissue>
    </source>
</reference>
<reference key="5">
    <citation type="journal article" date="2011" name="BMC Syst. Biol.">
        <title>Initial characterization of the human central proteome.</title>
        <authorList>
            <person name="Burkard T.R."/>
            <person name="Planyavsky M."/>
            <person name="Kaupe I."/>
            <person name="Breitwieser F.P."/>
            <person name="Buerckstuemmer T."/>
            <person name="Bennett K.L."/>
            <person name="Superti-Furga G."/>
            <person name="Colinge J."/>
        </authorList>
    </citation>
    <scope>IDENTIFICATION BY MASS SPECTROMETRY [LARGE SCALE ANALYSIS]</scope>
</reference>
<reference key="6">
    <citation type="journal article" date="2011" name="J. Biol. Chem.">
        <title>Deimination of human filaggrin-2 promotes its proteolysis by calpain 1.</title>
        <authorList>
            <person name="Hsu C.Y."/>
            <person name="Henry J."/>
            <person name="Raymond A.A."/>
            <person name="Mechin M.C."/>
            <person name="Pendaries V."/>
            <person name="Nassar D."/>
            <person name="Hansmann B."/>
            <person name="Balica S."/>
            <person name="Burlet-Schiltz O."/>
            <person name="Schmitt A.M."/>
            <person name="Takahara H."/>
            <person name="Paul C."/>
            <person name="Serre G."/>
            <person name="Simon M."/>
        </authorList>
    </citation>
    <scope>SUBCELLULAR LOCATION</scope>
    <scope>TISSUE SPECIFICITY</scope>
    <scope>CLEAVAGE BY CAPN1</scope>
    <scope>DEIMINATION BY PADI1/2/3</scope>
</reference>
<reference key="7">
    <citation type="journal article" date="2014" name="J. Proteomics">
        <title>An enzyme assisted RP-RPLC approach for in-depth analysis of human liver phosphoproteome.</title>
        <authorList>
            <person name="Bian Y."/>
            <person name="Song C."/>
            <person name="Cheng K."/>
            <person name="Dong M."/>
            <person name="Wang F."/>
            <person name="Huang J."/>
            <person name="Sun D."/>
            <person name="Wang L."/>
            <person name="Ye M."/>
            <person name="Zou H."/>
        </authorList>
    </citation>
    <scope>IDENTIFICATION BY MASS SPECTROMETRY [LARGE SCALE ANALYSIS]</scope>
    <source>
        <tissue>Liver</tissue>
    </source>
</reference>
<reference key="8">
    <citation type="journal article" date="2017" name="Am. J. Med. Genet. A">
        <title>Peeling skin syndrome associated with novel variant in FLG2 gene.</title>
        <authorList>
            <person name="Alfares A."/>
            <person name="Al-Khenaizan S."/>
            <person name="Al Mutairi F."/>
        </authorList>
    </citation>
    <scope>INVOLVEMENT IN PSS6</scope>
    <scope>VARIANT PSS6 211-SER--HIS-2391 DEL</scope>
</reference>
<reference key="9">
    <citation type="journal article" date="2018" name="J. Invest. Dermatol.">
        <title>Filaggrin 2 Deficiency Results in Abnormal Cell-Cell Adhesion in the Cornified Cell Layers and Causes Peeling Skin Syndrome Type A.</title>
        <authorList>
            <person name="Mohamad J."/>
            <person name="Sarig O."/>
            <person name="Godsel L.M."/>
            <person name="Peled A."/>
            <person name="Malchin N."/>
            <person name="Bochner R."/>
            <person name="Vodo D."/>
            <person name="Rabinowitz T."/>
            <person name="Pavlovsky M."/>
            <person name="Taiber S."/>
            <person name="Fried M."/>
            <person name="Eskin-Schwartz M."/>
            <person name="Assi S."/>
            <person name="Shomron N."/>
            <person name="Uitto J."/>
            <person name="Koetsier J.L."/>
            <person name="Bergman R."/>
            <person name="Green K.J."/>
            <person name="Sprecher E."/>
        </authorList>
    </citation>
    <scope>FUNCTION</scope>
    <scope>INVOLVEMENT IN PSS6</scope>
    <scope>VARIANT PSS6 355-TYR--HIS-2391 DEL</scope>
    <scope>CHARACTERIZATION OF VARIANT PSS6 355-TYR--HIS-2391 DEL</scope>
</reference>
<reference key="10">
    <citation type="journal article" date="2018" name="J. Invest. Dermatol.">
        <title>Generalized Ichthyotic Peeling Skin Syndrome due to FLG2 Mutations.</title>
        <authorList>
            <person name="Bolling M.C."/>
            <person name="Jan S.Z."/>
            <person name="Pasmooij A.M.G."/>
            <person name="Lemmink H.H."/>
            <person name="Franke L.H."/>
            <person name="Yenamandra V.K."/>
            <person name="Sinke R.J."/>
            <person name="van den Akker P.C."/>
            <person name="Jonkman M.F."/>
        </authorList>
    </citation>
    <scope>FUNCTION</scope>
    <scope>INVOLVEMENT IN PSS6</scope>
    <scope>VARIANT PSS6 211-SER--HIS-2391 DEL</scope>
    <scope>CHARACTERIZATION OF VARIANT PSS6 211-SER--HIS-2391 DEL</scope>
</reference>
<reference key="11">
    <citation type="journal article" date="2020" name="J. Hum. Genet.">
        <title>De novo variants in CUL3 are associated with global developmental delays with or without infantile spasms.</title>
        <authorList>
            <person name="Nakashima M."/>
            <person name="Kato M."/>
            <person name="Matsukura M."/>
            <person name="Kira R."/>
            <person name="Ngu L.H."/>
            <person name="Lichtenbelt K.D."/>
            <person name="van Gassen K.L.I."/>
            <person name="Mitsuhashi S."/>
            <person name="Saitsu H."/>
            <person name="Matsumoto N."/>
        </authorList>
    </citation>
    <scope>VARIANTS THR-12 AND VAL-1450</scope>
</reference>
<dbReference type="EMBL" id="AY827490">
    <property type="protein sequence ID" value="AAX12417.1"/>
    <property type="molecule type" value="mRNA"/>
</dbReference>
<dbReference type="EMBL" id="DQ118293">
    <property type="protein sequence ID" value="AAZ99029.1"/>
    <property type="molecule type" value="Genomic_DNA"/>
</dbReference>
<dbReference type="EMBL" id="AL356504">
    <property type="status" value="NOT_ANNOTATED_CDS"/>
    <property type="molecule type" value="Genomic_DNA"/>
</dbReference>
<dbReference type="CCDS" id="CCDS30861.1"/>
<dbReference type="RefSeq" id="NP_001014364.1">
    <property type="nucleotide sequence ID" value="NM_001014342.3"/>
</dbReference>
<dbReference type="SMR" id="Q5D862"/>
<dbReference type="BioGRID" id="132815">
    <property type="interactions" value="142"/>
</dbReference>
<dbReference type="FunCoup" id="Q5D862">
    <property type="interactions" value="150"/>
</dbReference>
<dbReference type="IntAct" id="Q5D862">
    <property type="interactions" value="47"/>
</dbReference>
<dbReference type="MINT" id="Q5D862"/>
<dbReference type="STRING" id="9606.ENSP00000373370"/>
<dbReference type="GlyGen" id="Q5D862">
    <property type="glycosylation" value="2 sites, 1 O-linked glycan (1 site)"/>
</dbReference>
<dbReference type="iPTMnet" id="Q5D862"/>
<dbReference type="PhosphoSitePlus" id="Q5D862"/>
<dbReference type="SwissPalm" id="Q5D862"/>
<dbReference type="BioMuta" id="FLG2"/>
<dbReference type="DMDM" id="74755309"/>
<dbReference type="jPOST" id="Q5D862"/>
<dbReference type="MassIVE" id="Q5D862"/>
<dbReference type="PaxDb" id="9606-ENSP00000373370"/>
<dbReference type="PeptideAtlas" id="Q5D862"/>
<dbReference type="ProteomicsDB" id="62742"/>
<dbReference type="Antibodypedia" id="34087">
    <property type="antibodies" value="53 antibodies from 11 providers"/>
</dbReference>
<dbReference type="DNASU" id="388698"/>
<dbReference type="Ensembl" id="ENST00000388718.5">
    <property type="protein sequence ID" value="ENSP00000373370.4"/>
    <property type="gene ID" value="ENSG00000143520.6"/>
</dbReference>
<dbReference type="GeneID" id="388698"/>
<dbReference type="KEGG" id="hsa:388698"/>
<dbReference type="MANE-Select" id="ENST00000388718.5">
    <property type="protein sequence ID" value="ENSP00000373370.4"/>
    <property type="RefSeq nucleotide sequence ID" value="NM_001014342.3"/>
    <property type="RefSeq protein sequence ID" value="NP_001014364.1"/>
</dbReference>
<dbReference type="UCSC" id="uc001ezw.5">
    <property type="organism name" value="human"/>
</dbReference>
<dbReference type="AGR" id="HGNC:33276"/>
<dbReference type="CTD" id="388698"/>
<dbReference type="DisGeNET" id="388698"/>
<dbReference type="GeneCards" id="FLG2"/>
<dbReference type="HGNC" id="HGNC:33276">
    <property type="gene designation" value="FLG2"/>
</dbReference>
<dbReference type="HPA" id="ENSG00000143520">
    <property type="expression patterns" value="Tissue enriched (skin)"/>
</dbReference>
<dbReference type="MalaCards" id="FLG2"/>
<dbReference type="MIM" id="616284">
    <property type="type" value="gene"/>
</dbReference>
<dbReference type="MIM" id="618084">
    <property type="type" value="phenotype"/>
</dbReference>
<dbReference type="neXtProt" id="NX_Q5D862"/>
<dbReference type="OpenTargets" id="ENSG00000143520"/>
<dbReference type="Orphanet" id="263548">
    <property type="disease" value="Peeling skin syndrome type A"/>
</dbReference>
<dbReference type="PharmGKB" id="PA162388694"/>
<dbReference type="VEuPathDB" id="HostDB:ENSG00000143520"/>
<dbReference type="eggNOG" id="ENOG502QQH0">
    <property type="taxonomic scope" value="Eukaryota"/>
</dbReference>
<dbReference type="GeneTree" id="ENSGT00940000154467"/>
<dbReference type="HOGENOM" id="CLU_234089_0_0_1"/>
<dbReference type="InParanoid" id="Q5D862"/>
<dbReference type="OMA" id="TRHGHSG"/>
<dbReference type="OrthoDB" id="9909924at2759"/>
<dbReference type="PAN-GO" id="Q5D862">
    <property type="GO annotations" value="3 GO annotations based on evolutionary models"/>
</dbReference>
<dbReference type="PhylomeDB" id="Q5D862"/>
<dbReference type="TreeFam" id="TF338665"/>
<dbReference type="PathwayCommons" id="Q5D862"/>
<dbReference type="Reactome" id="R-HSA-6798695">
    <property type="pathway name" value="Neutrophil degranulation"/>
</dbReference>
<dbReference type="SignaLink" id="Q5D862"/>
<dbReference type="BioGRID-ORCS" id="388698">
    <property type="hits" value="11 hits in 1144 CRISPR screens"/>
</dbReference>
<dbReference type="GenomeRNAi" id="388698"/>
<dbReference type="Pharos" id="Q5D862">
    <property type="development level" value="Tbio"/>
</dbReference>
<dbReference type="PRO" id="PR:Q5D862"/>
<dbReference type="Proteomes" id="UP000005640">
    <property type="component" value="Chromosome 1"/>
</dbReference>
<dbReference type="RNAct" id="Q5D862">
    <property type="molecule type" value="protein"/>
</dbReference>
<dbReference type="Bgee" id="ENSG00000143520">
    <property type="expression patterns" value="Expressed in upper leg skin and 81 other cell types or tissues"/>
</dbReference>
<dbReference type="GO" id="GO:0001533">
    <property type="term" value="C:cornified envelope"/>
    <property type="evidence" value="ECO:0000318"/>
    <property type="project" value="GO_Central"/>
</dbReference>
<dbReference type="GO" id="GO:0005737">
    <property type="term" value="C:cytoplasm"/>
    <property type="evidence" value="ECO:0000314"/>
    <property type="project" value="UniProtKB"/>
</dbReference>
<dbReference type="GO" id="GO:0005576">
    <property type="term" value="C:extracellular region"/>
    <property type="evidence" value="ECO:0000304"/>
    <property type="project" value="Reactome"/>
</dbReference>
<dbReference type="GO" id="GO:0036457">
    <property type="term" value="C:keratohyalin granule"/>
    <property type="evidence" value="ECO:0000318"/>
    <property type="project" value="GO_Central"/>
</dbReference>
<dbReference type="GO" id="GO:0005634">
    <property type="term" value="C:nucleus"/>
    <property type="evidence" value="ECO:0007005"/>
    <property type="project" value="UniProtKB"/>
</dbReference>
<dbReference type="GO" id="GO:1904724">
    <property type="term" value="C:tertiary granule lumen"/>
    <property type="evidence" value="ECO:0000304"/>
    <property type="project" value="Reactome"/>
</dbReference>
<dbReference type="GO" id="GO:0005509">
    <property type="term" value="F:calcium ion binding"/>
    <property type="evidence" value="ECO:0007669"/>
    <property type="project" value="InterPro"/>
</dbReference>
<dbReference type="GO" id="GO:0005198">
    <property type="term" value="F:structural molecule activity"/>
    <property type="evidence" value="ECO:0007669"/>
    <property type="project" value="InterPro"/>
</dbReference>
<dbReference type="GO" id="GO:0046914">
    <property type="term" value="F:transition metal ion binding"/>
    <property type="evidence" value="ECO:0007669"/>
    <property type="project" value="InterPro"/>
</dbReference>
<dbReference type="GO" id="GO:0007155">
    <property type="term" value="P:cell adhesion"/>
    <property type="evidence" value="ECO:0000315"/>
    <property type="project" value="UniProtKB"/>
</dbReference>
<dbReference type="GO" id="GO:0048730">
    <property type="term" value="P:epidermis morphogenesis"/>
    <property type="evidence" value="ECO:0000315"/>
    <property type="project" value="UniProtKB"/>
</dbReference>
<dbReference type="GO" id="GO:0061436">
    <property type="term" value="P:establishment of skin barrier"/>
    <property type="evidence" value="ECO:0000270"/>
    <property type="project" value="UniProtKB"/>
</dbReference>
<dbReference type="CDD" id="cd00213">
    <property type="entry name" value="S-100"/>
    <property type="match status" value="1"/>
</dbReference>
<dbReference type="FunFam" id="1.10.238.10:FF:000133">
    <property type="entry name" value="Filaggrin"/>
    <property type="match status" value="1"/>
</dbReference>
<dbReference type="Gene3D" id="1.10.238.10">
    <property type="entry name" value="EF-hand"/>
    <property type="match status" value="1"/>
</dbReference>
<dbReference type="InterPro" id="IPR011992">
    <property type="entry name" value="EF-hand-dom_pair"/>
</dbReference>
<dbReference type="InterPro" id="IPR018247">
    <property type="entry name" value="EF_Hand_1_Ca_BS"/>
</dbReference>
<dbReference type="InterPro" id="IPR002048">
    <property type="entry name" value="EF_hand_dom"/>
</dbReference>
<dbReference type="InterPro" id="IPR003303">
    <property type="entry name" value="Filaggrin"/>
</dbReference>
<dbReference type="InterPro" id="IPR034325">
    <property type="entry name" value="S-100_dom"/>
</dbReference>
<dbReference type="InterPro" id="IPR052503">
    <property type="entry name" value="S100-fused_Epidermal_Struct"/>
</dbReference>
<dbReference type="InterPro" id="IPR001751">
    <property type="entry name" value="S100/CaBP7/8-like_CS"/>
</dbReference>
<dbReference type="InterPro" id="IPR013787">
    <property type="entry name" value="S100_Ca-bd_sub"/>
</dbReference>
<dbReference type="PANTHER" id="PTHR22571:SF24">
    <property type="entry name" value="FILAGGRIN-2"/>
    <property type="match status" value="1"/>
</dbReference>
<dbReference type="PANTHER" id="PTHR22571">
    <property type="entry name" value="FILAGGRIN-RELATED"/>
    <property type="match status" value="1"/>
</dbReference>
<dbReference type="Pfam" id="PF01023">
    <property type="entry name" value="S_100"/>
    <property type="match status" value="1"/>
</dbReference>
<dbReference type="PRINTS" id="PR00487">
    <property type="entry name" value="FILAGGRIN"/>
</dbReference>
<dbReference type="SMART" id="SM01394">
    <property type="entry name" value="S_100"/>
    <property type="match status" value="1"/>
</dbReference>
<dbReference type="SUPFAM" id="SSF47473">
    <property type="entry name" value="EF-hand"/>
    <property type="match status" value="1"/>
</dbReference>
<dbReference type="PROSITE" id="PS00018">
    <property type="entry name" value="EF_HAND_1"/>
    <property type="match status" value="1"/>
</dbReference>
<dbReference type="PROSITE" id="PS50222">
    <property type="entry name" value="EF_HAND_2"/>
    <property type="match status" value="2"/>
</dbReference>
<dbReference type="PROSITE" id="PS00303">
    <property type="entry name" value="S100_CABP"/>
    <property type="match status" value="1"/>
</dbReference>
<keyword id="KW-0106">Calcium</keyword>
<keyword id="KW-0963">Cytoplasm</keyword>
<keyword id="KW-0903">Direct protein sequencing</keyword>
<keyword id="KW-0225">Disease variant</keyword>
<keyword id="KW-0479">Metal-binding</keyword>
<keyword id="KW-0597">Phosphoprotein</keyword>
<keyword id="KW-1267">Proteomics identification</keyword>
<keyword id="KW-1185">Reference proteome</keyword>
<keyword id="KW-0677">Repeat</keyword>
<sequence>MTDLLRSVVTVIDVFYKYTKQDGECGTLSKGELKELLEKELHPVLKNPDDPDTVDVIMHMLDRDHDRRLDFTEFLLMIFKLTMACNKVLSKEYCKASGSKKHRRGHRHQEEESETEEDEEDTPGHKSGYRHSSWSEGEEHGYSSGHSRGTVKCRHGSNSRRLGRQGNLSSSGNQEGSQKRYHRSSCGHSWSGGKDRHGSSSVELRERINKSHISPSRESGEEYESGSGSNSWERKGHGGLSCGLETSGHESNSTQSRIREQKLGSSCSGSGDSGRRSHACGYSNSSGCGRPQNASSSCQSHRFGGQGNQFSYIQSGCQSGIKGGQGHGCVSGGQPSGCGQPESNPCSQSYSQRGYGARENGQPQNCGGQWRTGSSQSSCCGQYGSGGSQSCSNGQHEYGSCGRFSNSSSSNEFSKCDQYGSGSSQSTSFEQHGTGLSQSSGFEQHVCGSGQTCGQHESTSSQSLGYDQHGSSSGKTSGFGQHGSGSGQSSGFGQCGSGSGQSSGFGQHGSVSGQSSGFGQHGSVSGQSSGFGQHESRSRQSSYGQHGSGSSQSSGYGQYGSRETSGFGQHGLGSGQSTGFGQYGSGSGQSSGFGQHGSGSGQSSGFGQHESRSGQSSYGQHSSGSSQSSGYGQHGSRQTSGFGQHGSGSSQSTGFGQYGSGSGQSSGFGQHVSGSGQSSGFGQHESRSGHSSYGQHGFGSSQSSGYGQHGSSSGQTSGFGQHELSSGQSSSFGQHGSGSGQSSGFGQHGSGSGQSSGFGQHESRSGQSSYGQHSSGSSQSSGYGQHGSRQTSGFGQHGSGSSQSTGFGQYGSGSGQSAGFGQHGSGSGQSSGFGQHESRSHQSSYGQHGSGSSQSSGYGQHGSSSGQTSGFGQHRSSSGQYSGFGQHGSGSGQSSGFGQHGTGSGQYSGFGQHESRSHQSSYGQHGSGSSQSSGYGQHGSSSGQTFGFGQHRSGSGQSSGFGQHGSGSGQSSGFGQHESGSGKSSGFGQHESRSSQSNYGQHGSGSSQSSGYGQHGSSSGQTTGFGQHRSSSGQYSGFGQHGSGSDQSSGFGQHGTGSGQSSGFGQYESRSRQSSYGQHGSGSSQSSGYGQHGSNSGQTSGFGQHRPGSGQSSGFGQYGSGSGQSSGFGQHGSGTGKSSGFAQHEYRSGQSSYGQHGTGSSQSSGCGQHESGSGPTTSFGQHVSGSDNFSSSGQHISDSGQSTGFGQYGSGSGQSTGLGQGESQQVESGSTVHGRQETTHGQTINTTRHSQSGQGQSTQTGSRVTRRRRSSQSENSDSEVHSKVSHRHSEHIHTQAGSHYPKSGSTVRRRQGTTHGQRGDTTRHGHSGHGQSTQTGSRTSGRQRFSHSDATDSEVHSGVSHRPHSQEQTHSQAGSQHGESESTVHERHETTYGQTGEATGHGHSGHGQSTQRGSRTTGRRGSGHSESSDSEVHSGGSHRPQSQEQTHGQAGSQHGESGSTVHGRHGTTHGQTGDTTRHAHYHHGKSTQRGSSTTGRRGSGHSESSDSEVHSGGSHTHSGHTHGQSGSQHGESESIIHDRHRITHGQTGDTTRHSYSGHEQTTQTGSRTTGRQRTSHSESTDSEVHSGGSHRPHSREHTYGQAGSQHEEPEFTVHERHGTTHGQIGDTTGHSHSGHGQSTQRGSRTTGRQRSSHSESSDSEVHSGVSHTHTGHTHGQAGSQHGQSESIVPERHGTTHGQTGDTTRHAHYHHGLTTQTGSRTTGRRGSGHSEYSDSEGYSGVSHTHSGHTHGQARSQHGESESIVHERHGTIHGQTGDTTRHAHSGHGQSTQTGSRTTGRRSSGHSEYSDSEGHSGFSQRPHSRGHTHGQAGSQHGESESIVDERHGTTHGQTGDTSGHSQSGHGQSTQSGSSTTGRRRSGHSESSDSEVHSGGSHTHSGHTHSQARSQHGESESTVHKRHQTTHGQTGDTTEHGHPSHGQTIQTGSRTTGRRGSGHSEYSDSEGPSGVSHTHSGHTHGQAGSHYPESGSSVHERHGTTHGQTADTTRHGHSGHGQSTQRGSRTTGRRASGHSEYSDSEGHSGVSHTHSGHAHGQAGSQHGESGSSVHERHGTTHGQTGDTTRHAHSGHGQSTQRGSRTAGRRGSGHSESSDSEVHSGVSHTHSGHTYGQARSQHGESGSAIHGRQGTIHGQTGDTTRHGQSGHGQSTQTGSRTTGRQRSSHSESSDSEVHSEASPTHSGHTHSQAGSRHGQSGSSGHGRQGTTHGQTGDTTRHAHYGYGQSTQRGSRTTGRRGSGHSESSDSEVHSWGSHTHSGHIQGQAGSQQRQPGSTVHGRLETTHGQTGDTTRHGHSGYGQSTQTGSRSSRASHFQSHSSERQRHGSSQVWKHGSYGPAEYDYGHTGYGPSGGSRKSISNSHLSWSTDSTANKQLSRH</sequence>
<feature type="chain" id="PRO_0000331454" description="Filaggrin-2">
    <location>
        <begin position="1"/>
        <end position="2391"/>
    </location>
</feature>
<feature type="domain" description="EF-hand 1" evidence="3">
    <location>
        <begin position="8"/>
        <end position="43"/>
    </location>
</feature>
<feature type="domain" description="EF-hand 2" evidence="3">
    <location>
        <begin position="49"/>
        <end position="84"/>
    </location>
</feature>
<feature type="repeat" description="Filaggrin 1">
    <location>
        <begin position="245"/>
        <end position="289"/>
    </location>
</feature>
<feature type="repeat" description="Filaggrin 2">
    <location>
        <begin position="421"/>
        <end position="466"/>
    </location>
</feature>
<feature type="repeat" description="Filaggrin 3">
    <location>
        <begin position="1019"/>
        <end position="1051"/>
    </location>
</feature>
<feature type="repeat" description="Filaggrin 4">
    <location>
        <begin position="1097"/>
        <end position="1141"/>
    </location>
</feature>
<feature type="repeat" description="Filaggrin 5">
    <location>
        <begin position="1455"/>
        <end position="1510"/>
    </location>
</feature>
<feature type="repeat" description="Filaggrin 6">
    <location>
        <begin position="1607"/>
        <end position="1662"/>
    </location>
</feature>
<feature type="repeat" description="Filaggrin 7">
    <location>
        <begin position="1757"/>
        <end position="1812"/>
    </location>
</feature>
<feature type="repeat" description="Filaggrin 8">
    <location>
        <begin position="1928"/>
        <end position="1964"/>
    </location>
</feature>
<feature type="repeat" description="Filaggrin 9">
    <location>
        <begin position="1984"/>
        <end position="2039"/>
    </location>
</feature>
<feature type="repeat" description="Filaggrin 10">
    <location>
        <begin position="2134"/>
        <end position="2189"/>
    </location>
</feature>
<feature type="region of interest" description="S-100-like" evidence="1">
    <location>
        <begin position="1"/>
        <end position="81"/>
    </location>
</feature>
<feature type="region of interest" description="Disordered" evidence="4">
    <location>
        <begin position="96"/>
        <end position="275"/>
    </location>
</feature>
<feature type="region of interest" description="Disordered" evidence="4">
    <location>
        <begin position="349"/>
        <end position="369"/>
    </location>
</feature>
<feature type="region of interest" description="Disordered" evidence="4">
    <location>
        <begin position="406"/>
        <end position="2391"/>
    </location>
</feature>
<feature type="compositionally biased region" description="Basic residues" evidence="4">
    <location>
        <begin position="98"/>
        <end position="107"/>
    </location>
</feature>
<feature type="compositionally biased region" description="Acidic residues" evidence="4">
    <location>
        <begin position="111"/>
        <end position="121"/>
    </location>
</feature>
<feature type="compositionally biased region" description="Basic residues" evidence="4">
    <location>
        <begin position="149"/>
        <end position="163"/>
    </location>
</feature>
<feature type="compositionally biased region" description="Polar residues" evidence="4">
    <location>
        <begin position="166"/>
        <end position="176"/>
    </location>
</feature>
<feature type="compositionally biased region" description="Basic and acidic residues" evidence="4">
    <location>
        <begin position="193"/>
        <end position="209"/>
    </location>
</feature>
<feature type="compositionally biased region" description="Polar residues" evidence="4">
    <location>
        <begin position="420"/>
        <end position="442"/>
    </location>
</feature>
<feature type="compositionally biased region" description="Polar residues" evidence="4">
    <location>
        <begin position="449"/>
        <end position="476"/>
    </location>
</feature>
<feature type="compositionally biased region" description="Gly residues" evidence="4">
    <location>
        <begin position="480"/>
        <end position="507"/>
    </location>
</feature>
<feature type="compositionally biased region" description="Low complexity" evidence="4">
    <location>
        <begin position="508"/>
        <end position="562"/>
    </location>
</feature>
<feature type="compositionally biased region" description="Gly residues" evidence="4">
    <location>
        <begin position="568"/>
        <end position="604"/>
    </location>
</feature>
<feature type="compositionally biased region" description="Low complexity" evidence="4">
    <location>
        <begin position="605"/>
        <end position="655"/>
    </location>
</feature>
<feature type="compositionally biased region" description="Gly residues" evidence="4">
    <location>
        <begin position="656"/>
        <end position="666"/>
    </location>
</feature>
<feature type="compositionally biased region" description="Low complexity" evidence="4">
    <location>
        <begin position="667"/>
        <end position="734"/>
    </location>
</feature>
<feature type="compositionally biased region" description="Gly residues" evidence="4">
    <location>
        <begin position="735"/>
        <end position="756"/>
    </location>
</feature>
<feature type="compositionally biased region" description="Low complexity" evidence="4">
    <location>
        <begin position="757"/>
        <end position="807"/>
    </location>
</feature>
<feature type="compositionally biased region" description="Gly residues" evidence="4">
    <location>
        <begin position="808"/>
        <end position="831"/>
    </location>
</feature>
<feature type="compositionally biased region" description="Low complexity" evidence="4">
    <location>
        <begin position="832"/>
        <end position="884"/>
    </location>
</feature>
<feature type="compositionally biased region" description="Gly residues" evidence="4">
    <location>
        <begin position="885"/>
        <end position="908"/>
    </location>
</feature>
<feature type="compositionally biased region" description="Low complexity" evidence="4">
    <location>
        <begin position="918"/>
        <end position="956"/>
    </location>
</feature>
<feature type="compositionally biased region" description="Gly residues" evidence="4">
    <location>
        <begin position="957"/>
        <end position="972"/>
    </location>
</feature>
<feature type="compositionally biased region" description="Low complexity" evidence="4">
    <location>
        <begin position="973"/>
        <end position="982"/>
    </location>
</feature>
<feature type="compositionally biased region" description="Low complexity" evidence="4">
    <location>
        <begin position="994"/>
        <end position="1027"/>
    </location>
</feature>
<feature type="compositionally biased region" description="Gly residues" evidence="4">
    <location>
        <begin position="1052"/>
        <end position="1062"/>
    </location>
</feature>
<feature type="compositionally biased region" description="Low complexity" evidence="4">
    <location>
        <begin position="1063"/>
        <end position="1098"/>
    </location>
</feature>
<feature type="compositionally biased region" description="Gly residues" evidence="4">
    <location>
        <begin position="1111"/>
        <end position="1137"/>
    </location>
</feature>
<feature type="compositionally biased region" description="Low complexity" evidence="4">
    <location>
        <begin position="1148"/>
        <end position="1174"/>
    </location>
</feature>
<feature type="compositionally biased region" description="Polar residues" evidence="4">
    <location>
        <begin position="1175"/>
        <end position="1198"/>
    </location>
</feature>
<feature type="compositionally biased region" description="Gly residues" evidence="4">
    <location>
        <begin position="1206"/>
        <end position="1220"/>
    </location>
</feature>
<feature type="compositionally biased region" description="Polar residues" evidence="4">
    <location>
        <begin position="1226"/>
        <end position="1249"/>
    </location>
</feature>
<feature type="compositionally biased region" description="Low complexity" evidence="4">
    <location>
        <begin position="1250"/>
        <end position="1263"/>
    </location>
</feature>
<feature type="compositionally biased region" description="Polar residues" evidence="4">
    <location>
        <begin position="1329"/>
        <end position="1343"/>
    </location>
</feature>
<feature type="compositionally biased region" description="Basic and acidic residues" evidence="4">
    <location>
        <begin position="1346"/>
        <end position="1355"/>
    </location>
</feature>
<feature type="compositionally biased region" description="Polar residues" evidence="4">
    <location>
        <begin position="1366"/>
        <end position="1377"/>
    </location>
</feature>
<feature type="compositionally biased region" description="Basic and acidic residues" evidence="4">
    <location>
        <begin position="1378"/>
        <end position="1390"/>
    </location>
</feature>
<feature type="compositionally biased region" description="Low complexity" evidence="4">
    <location>
        <begin position="1406"/>
        <end position="1416"/>
    </location>
</feature>
<feature type="compositionally biased region" description="Polar residues" evidence="4">
    <location>
        <begin position="1439"/>
        <end position="1459"/>
    </location>
</feature>
<feature type="compositionally biased region" description="Low complexity" evidence="4">
    <location>
        <begin position="1487"/>
        <end position="1496"/>
    </location>
</feature>
<feature type="compositionally biased region" description="Low complexity" evidence="4">
    <location>
        <begin position="1510"/>
        <end position="1529"/>
    </location>
</feature>
<feature type="compositionally biased region" description="Polar residues" evidence="4">
    <location>
        <begin position="1544"/>
        <end position="1559"/>
    </location>
</feature>
<feature type="compositionally biased region" description="Low complexity" evidence="4">
    <location>
        <begin position="1560"/>
        <end position="1572"/>
    </location>
</feature>
<feature type="compositionally biased region" description="Basic and acidic residues" evidence="4">
    <location>
        <begin position="1575"/>
        <end position="1584"/>
    </location>
</feature>
<feature type="compositionally biased region" description="Basic and acidic residues" evidence="4">
    <location>
        <begin position="1605"/>
        <end position="1618"/>
    </location>
</feature>
<feature type="compositionally biased region" description="Low complexity" evidence="4">
    <location>
        <begin position="1627"/>
        <end position="1649"/>
    </location>
</feature>
<feature type="compositionally biased region" description="Basic and acidic residues" evidence="4">
    <location>
        <begin position="1652"/>
        <end position="1661"/>
    </location>
</feature>
<feature type="compositionally biased region" description="Low complexity" evidence="4">
    <location>
        <begin position="1662"/>
        <end position="1686"/>
    </location>
</feature>
<feature type="compositionally biased region" description="Low complexity" evidence="4">
    <location>
        <begin position="1711"/>
        <end position="1720"/>
    </location>
</feature>
<feature type="compositionally biased region" description="Basic and acidic residues" evidence="4">
    <location>
        <begin position="1755"/>
        <end position="1768"/>
    </location>
</feature>
<feature type="compositionally biased region" description="Low complexity" evidence="4">
    <location>
        <begin position="1784"/>
        <end position="1795"/>
    </location>
</feature>
<feature type="compositionally biased region" description="Basic and acidic residues" evidence="4">
    <location>
        <begin position="1834"/>
        <end position="1845"/>
    </location>
</feature>
<feature type="compositionally biased region" description="Low complexity" evidence="4">
    <location>
        <begin position="1849"/>
        <end position="1873"/>
    </location>
</feature>
<feature type="compositionally biased region" description="Basic and acidic residues" evidence="4">
    <location>
        <begin position="1879"/>
        <end position="1888"/>
    </location>
</feature>
<feature type="compositionally biased region" description="Low complexity" evidence="4">
    <location>
        <begin position="1963"/>
        <end position="1982"/>
    </location>
</feature>
<feature type="compositionally biased region" description="Low complexity" evidence="4">
    <location>
        <begin position="2013"/>
        <end position="2022"/>
    </location>
</feature>
<feature type="compositionally biased region" description="Low complexity" evidence="4">
    <location>
        <begin position="2039"/>
        <end position="2059"/>
    </location>
</feature>
<feature type="compositionally biased region" description="Low complexity" evidence="4">
    <location>
        <begin position="2114"/>
        <end position="2125"/>
    </location>
</feature>
<feature type="compositionally biased region" description="Low complexity" evidence="4">
    <location>
        <begin position="2162"/>
        <end position="2176"/>
    </location>
</feature>
<feature type="compositionally biased region" description="Basic and acidic residues" evidence="4">
    <location>
        <begin position="2179"/>
        <end position="2190"/>
    </location>
</feature>
<feature type="compositionally biased region" description="Low complexity" evidence="4">
    <location>
        <begin position="2201"/>
        <end position="2211"/>
    </location>
</feature>
<feature type="compositionally biased region" description="Low complexity" evidence="4">
    <location>
        <begin position="2219"/>
        <end position="2228"/>
    </location>
</feature>
<feature type="compositionally biased region" description="Low complexity" evidence="4">
    <location>
        <begin position="2238"/>
        <end position="2247"/>
    </location>
</feature>
<feature type="compositionally biased region" description="Polar residues" evidence="4">
    <location>
        <begin position="2273"/>
        <end position="2288"/>
    </location>
</feature>
<feature type="compositionally biased region" description="Low complexity" evidence="4">
    <location>
        <begin position="2320"/>
        <end position="2331"/>
    </location>
</feature>
<feature type="compositionally biased region" description="Polar residues" evidence="4">
    <location>
        <begin position="2367"/>
        <end position="2391"/>
    </location>
</feature>
<feature type="binding site" evidence="3">
    <location>
        <position position="62"/>
    </location>
    <ligand>
        <name>Ca(2+)</name>
        <dbReference type="ChEBI" id="CHEBI:29108"/>
    </ligand>
</feature>
<feature type="binding site" evidence="3">
    <location>
        <position position="64"/>
    </location>
    <ligand>
        <name>Ca(2+)</name>
        <dbReference type="ChEBI" id="CHEBI:29108"/>
    </ligand>
</feature>
<feature type="binding site" evidence="3">
    <location>
        <position position="66"/>
    </location>
    <ligand>
        <name>Ca(2+)</name>
        <dbReference type="ChEBI" id="CHEBI:29108"/>
    </ligand>
</feature>
<feature type="binding site" evidence="3">
    <location>
        <position position="68"/>
    </location>
    <ligand>
        <name>Ca(2+)</name>
        <dbReference type="ChEBI" id="CHEBI:29108"/>
    </ligand>
</feature>
<feature type="binding site" evidence="3">
    <location>
        <position position="73"/>
    </location>
    <ligand>
        <name>Ca(2+)</name>
        <dbReference type="ChEBI" id="CHEBI:29108"/>
    </ligand>
</feature>
<feature type="modified residue" description="Phosphoserine" evidence="2">
    <location>
        <position position="1276"/>
    </location>
</feature>
<feature type="modified residue" description="Phosphoserine" evidence="2">
    <location>
        <position position="1427"/>
    </location>
</feature>
<feature type="modified residue" description="Phosphoserine" evidence="2">
    <location>
        <position position="1428"/>
    </location>
</feature>
<feature type="modified residue" description="Phosphoserine" evidence="2">
    <location>
        <position position="1504"/>
    </location>
</feature>
<feature type="modified residue" description="Phosphoserine" evidence="2">
    <location>
        <position position="1505"/>
    </location>
</feature>
<feature type="modified residue" description="Phosphoserine" evidence="2">
    <location>
        <position position="1579"/>
    </location>
</feature>
<feature type="modified residue" description="Phosphoserine" evidence="2">
    <location>
        <position position="1656"/>
    </location>
</feature>
<feature type="modified residue" description="Phosphoserine" evidence="2">
    <location>
        <position position="1657"/>
    </location>
</feature>
<feature type="modified residue" description="Phosphoserine" evidence="2">
    <location>
        <position position="1800"/>
    </location>
</feature>
<feature type="modified residue" description="Phosphoserine" evidence="2">
    <location>
        <position position="1807"/>
    </location>
</feature>
<feature type="modified residue" description="Phosphoserine" evidence="2">
    <location>
        <position position="1883"/>
    </location>
</feature>
<feature type="modified residue" description="Phosphoserine" evidence="2">
    <location>
        <position position="1884"/>
    </location>
</feature>
<feature type="modified residue" description="Phosphoserine" evidence="2">
    <location>
        <position position="1959"/>
    </location>
</feature>
<feature type="modified residue" description="Phosphoserine" evidence="2">
    <location>
        <position position="2034"/>
    </location>
</feature>
<feature type="sequence variant" id="VAR_085409" description="In dbSNP:rs774342933." evidence="10">
    <original>I</original>
    <variation>T</variation>
    <location>
        <position position="12"/>
    </location>
</feature>
<feature type="sequence variant" id="VAR_042868" description="In dbSNP:rs3818831.">
    <original>L</original>
    <variation>F</variation>
    <location>
        <position position="41"/>
    </location>
</feature>
<feature type="sequence variant" id="VAR_042869" description="In dbSNP:rs2282304.">
    <original>R</original>
    <variation>Q</variation>
    <location>
        <position position="107"/>
    </location>
</feature>
<feature type="sequence variant" id="VAR_042870" description="In dbSNP:rs6587667.">
    <original>G</original>
    <variation>E</variation>
    <location>
        <position position="137"/>
    </location>
</feature>
<feature type="sequence variant" id="VAR_081283" description="In PSS6; reduced protein abundance in patient's skin." evidence="7 8">
    <location>
        <begin position="211"/>
        <end position="2391"/>
    </location>
</feature>
<feature type="sequence variant" id="VAR_042871" description="In dbSNP:rs2282303.">
    <original>R</original>
    <variation>Q</variation>
    <location>
        <position position="276"/>
    </location>
</feature>
<feature type="sequence variant" id="VAR_042872" description="In dbSNP:rs2282302.">
    <original>C</original>
    <variation>S</variation>
    <location>
        <position position="298"/>
    </location>
</feature>
<feature type="sequence variant" id="VAR_081284" description="In PSS6; reduced protein abundance in patient's skin." evidence="9">
    <location>
        <begin position="355"/>
        <end position="2391"/>
    </location>
</feature>
<feature type="sequence variant" id="VAR_042873" description="In dbSNP:rs16842865.">
    <original>E</original>
    <variation>K</variation>
    <location>
        <position position="723"/>
    </location>
</feature>
<feature type="sequence variant" id="VAR_042874" description="In dbSNP:rs79239476.">
    <original>Y</original>
    <variation>S</variation>
    <location>
        <position position="881"/>
    </location>
</feature>
<feature type="sequence variant" id="VAR_059173" description="In dbSNP:rs12411129.">
    <original>S</original>
    <variation>Y</variation>
    <location>
        <position position="958"/>
    </location>
</feature>
<feature type="sequence variant" id="VAR_042875" description="In dbSNP:rs16833974.">
    <original>H</original>
    <variation>R</variation>
    <location>
        <position position="1249"/>
    </location>
</feature>
<feature type="sequence variant" id="VAR_085410" description="In dbSNP:rs1654050317." evidence="10">
    <original>A</original>
    <variation>V</variation>
    <location>
        <position position="1450"/>
    </location>
</feature>
<feature type="sequence variant" id="VAR_042876" description="In dbSNP:rs1858484.">
    <original>E</original>
    <variation>D</variation>
    <location>
        <position position="1992"/>
    </location>
</feature>
<feature type="sequence variant" id="VAR_042877" description="In dbSNP:rs12736606.">
    <original>Q</original>
    <variation>H</variation>
    <location>
        <position position="2239"/>
    </location>
</feature>
<proteinExistence type="evidence at protein level"/>
<accession>Q5D862</accession>
<accession>Q9H4U1</accession>
<gene>
    <name type="primary">FLG2</name>
    <name type="synonym">IFPS</name>
</gene>